<keyword id="KW-0325">Glycoprotein</keyword>
<keyword id="KW-0472">Membrane</keyword>
<keyword id="KW-1185">Reference proteome</keyword>
<keyword id="KW-0812">Transmembrane</keyword>
<keyword id="KW-1133">Transmembrane helix</keyword>
<dbReference type="EMBL" id="CR858972">
    <property type="protein sequence ID" value="CAH91167.1"/>
    <property type="molecule type" value="mRNA"/>
</dbReference>
<dbReference type="RefSeq" id="NP_001125683.2">
    <property type="nucleotide sequence ID" value="NM_001132211.2"/>
</dbReference>
<dbReference type="SMR" id="Q5RAP3"/>
<dbReference type="STRING" id="9601.ENSPPYP00000003362"/>
<dbReference type="GlyCosmos" id="Q5RAP3">
    <property type="glycosylation" value="2 sites, No reported glycans"/>
</dbReference>
<dbReference type="GeneID" id="100439255"/>
<dbReference type="KEGG" id="pon:100439255"/>
<dbReference type="CTD" id="7106"/>
<dbReference type="eggNOG" id="KOG3882">
    <property type="taxonomic scope" value="Eukaryota"/>
</dbReference>
<dbReference type="InParanoid" id="Q5RAP3"/>
<dbReference type="OrthoDB" id="432835at2759"/>
<dbReference type="Proteomes" id="UP000001595">
    <property type="component" value="Unplaced"/>
</dbReference>
<dbReference type="GO" id="GO:0005886">
    <property type="term" value="C:plasma membrane"/>
    <property type="evidence" value="ECO:0007669"/>
    <property type="project" value="TreeGrafter"/>
</dbReference>
<dbReference type="CDD" id="cd03165">
    <property type="entry name" value="NET-5_like_LEL"/>
    <property type="match status" value="1"/>
</dbReference>
<dbReference type="FunFam" id="1.10.1450.10:FF:000006">
    <property type="entry name" value="Tetraspanin"/>
    <property type="match status" value="1"/>
</dbReference>
<dbReference type="Gene3D" id="1.10.1450.10">
    <property type="entry name" value="Tetraspanin"/>
    <property type="match status" value="1"/>
</dbReference>
<dbReference type="InterPro" id="IPR018499">
    <property type="entry name" value="Tetraspanin/Peripherin"/>
</dbReference>
<dbReference type="InterPro" id="IPR000301">
    <property type="entry name" value="Tetraspanin_animals"/>
</dbReference>
<dbReference type="InterPro" id="IPR018503">
    <property type="entry name" value="Tetraspanin_CS"/>
</dbReference>
<dbReference type="InterPro" id="IPR008952">
    <property type="entry name" value="Tetraspanin_EC2_sf"/>
</dbReference>
<dbReference type="PANTHER" id="PTHR19282">
    <property type="entry name" value="TETRASPANIN"/>
    <property type="match status" value="1"/>
</dbReference>
<dbReference type="PANTHER" id="PTHR19282:SF40">
    <property type="entry name" value="TETRASPANIN-4"/>
    <property type="match status" value="1"/>
</dbReference>
<dbReference type="Pfam" id="PF00335">
    <property type="entry name" value="Tetraspanin"/>
    <property type="match status" value="1"/>
</dbReference>
<dbReference type="PIRSF" id="PIRSF002419">
    <property type="entry name" value="Tetraspanin"/>
    <property type="match status" value="1"/>
</dbReference>
<dbReference type="PRINTS" id="PR00259">
    <property type="entry name" value="TMFOUR"/>
</dbReference>
<dbReference type="SUPFAM" id="SSF48652">
    <property type="entry name" value="Tetraspanin"/>
    <property type="match status" value="1"/>
</dbReference>
<dbReference type="PROSITE" id="PS00421">
    <property type="entry name" value="TM4_1"/>
    <property type="match status" value="1"/>
</dbReference>
<evidence type="ECO:0000250" key="1"/>
<evidence type="ECO:0000255" key="2"/>
<evidence type="ECO:0000305" key="3"/>
<name>TSN4_PONAB</name>
<comment type="subunit">
    <text evidence="1">Forms a complex with integrins.</text>
</comment>
<comment type="subcellular location">
    <subcellularLocation>
        <location evidence="1">Membrane</location>
        <topology evidence="1">Multi-pass membrane protein</topology>
    </subcellularLocation>
</comment>
<comment type="similarity">
    <text evidence="3">Belongs to the tetraspanin (TM4SF) family.</text>
</comment>
<reference key="1">
    <citation type="submission" date="2004-11" db="EMBL/GenBank/DDBJ databases">
        <authorList>
            <consortium name="The German cDNA consortium"/>
        </authorList>
    </citation>
    <scope>NUCLEOTIDE SEQUENCE [LARGE SCALE MRNA]</scope>
    <source>
        <tissue>Kidney</tissue>
    </source>
</reference>
<feature type="chain" id="PRO_0000292955" description="Tetraspanin-4">
    <location>
        <begin position="1"/>
        <end position="238"/>
    </location>
</feature>
<feature type="topological domain" description="Cytoplasmic" evidence="2">
    <location>
        <begin position="1"/>
        <end position="13"/>
    </location>
</feature>
<feature type="transmembrane region" description="Helical" evidence="2">
    <location>
        <begin position="14"/>
        <end position="34"/>
    </location>
</feature>
<feature type="topological domain" description="Extracellular" evidence="2">
    <location>
        <begin position="35"/>
        <end position="55"/>
    </location>
</feature>
<feature type="transmembrane region" description="Helical" evidence="2">
    <location>
        <begin position="56"/>
        <end position="76"/>
    </location>
</feature>
<feature type="topological domain" description="Cytoplasmic" evidence="2">
    <location>
        <begin position="77"/>
        <end position="85"/>
    </location>
</feature>
<feature type="transmembrane region" description="Helical" evidence="2">
    <location>
        <begin position="86"/>
        <end position="106"/>
    </location>
</feature>
<feature type="topological domain" description="Extracellular" evidence="2">
    <location>
        <begin position="107"/>
        <end position="201"/>
    </location>
</feature>
<feature type="transmembrane region" description="Helical" evidence="2">
    <location>
        <begin position="202"/>
        <end position="222"/>
    </location>
</feature>
<feature type="topological domain" description="Cytoplasmic" evidence="2">
    <location>
        <begin position="223"/>
        <end position="238"/>
    </location>
</feature>
<feature type="glycosylation site" description="N-linked (GlcNAc...) asparagine" evidence="2">
    <location>
        <position position="152"/>
    </location>
</feature>
<feature type="glycosylation site" description="N-linked (GlcNAc...) asparagine" evidence="2">
    <location>
        <position position="161"/>
    </location>
</feature>
<protein>
    <recommendedName>
        <fullName>Tetraspanin-4</fullName>
        <shortName>Tspan-4</shortName>
    </recommendedName>
</protein>
<accession>Q5RAP3</accession>
<gene>
    <name type="primary">TSPAN4</name>
</gene>
<organism>
    <name type="scientific">Pongo abelii</name>
    <name type="common">Sumatran orangutan</name>
    <name type="synonym">Pongo pygmaeus abelii</name>
    <dbReference type="NCBI Taxonomy" id="9601"/>
    <lineage>
        <taxon>Eukaryota</taxon>
        <taxon>Metazoa</taxon>
        <taxon>Chordata</taxon>
        <taxon>Craniata</taxon>
        <taxon>Vertebrata</taxon>
        <taxon>Euteleostomi</taxon>
        <taxon>Mammalia</taxon>
        <taxon>Eutheria</taxon>
        <taxon>Euarchontoglires</taxon>
        <taxon>Primates</taxon>
        <taxon>Haplorrhini</taxon>
        <taxon>Catarrhini</taxon>
        <taxon>Hominidae</taxon>
        <taxon>Pongo</taxon>
    </lineage>
</organism>
<proteinExistence type="evidence at transcript level"/>
<sequence length="238" mass="26160">MARACLQAVKYLMFAFNLLFWLGGCGVLGVGIWLAATQGSFATLSSSFPSLSAANLLIITGAFVMAIGFVGCLGAIKENKCLLLTFFLLLLLVFLLEATIAILFFAYTDKIDRYAQRDLKKGLHLYGTQGNVGLTNAWTIIQTDFRCCGVSNYTDWFEVYNATRVPDSCCLEFSESCGLHAPGTWWKAPCYETVKVWLQENLLAVGIFGLCTALVQILGLTFAMTMYCQVVKADTYCA</sequence>